<keyword id="KW-0067">ATP-binding</keyword>
<keyword id="KW-0143">Chaperone</keyword>
<keyword id="KW-0547">Nucleotide-binding</keyword>
<keyword id="KW-0597">Phosphoprotein</keyword>
<keyword id="KW-0346">Stress response</keyword>
<name>DNAK_BURA4</name>
<feature type="chain" id="PRO_1000119677" description="Chaperone protein DnaK">
    <location>
        <begin position="1"/>
        <end position="650"/>
    </location>
</feature>
<feature type="region of interest" description="Disordered" evidence="2">
    <location>
        <begin position="611"/>
        <end position="637"/>
    </location>
</feature>
<feature type="compositionally biased region" description="Low complexity" evidence="2">
    <location>
        <begin position="611"/>
        <end position="636"/>
    </location>
</feature>
<feature type="modified residue" description="Phosphothreonine; by autocatalysis" evidence="1">
    <location>
        <position position="200"/>
    </location>
</feature>
<evidence type="ECO:0000255" key="1">
    <source>
        <dbReference type="HAMAP-Rule" id="MF_00332"/>
    </source>
</evidence>
<evidence type="ECO:0000256" key="2">
    <source>
        <dbReference type="SAM" id="MobiDB-lite"/>
    </source>
</evidence>
<gene>
    <name evidence="1" type="primary">dnaK</name>
    <name type="ordered locus">BamMC406_0669</name>
</gene>
<accession>B1YTK0</accession>
<proteinExistence type="inferred from homology"/>
<reference key="1">
    <citation type="submission" date="2008-04" db="EMBL/GenBank/DDBJ databases">
        <title>Complete sequence of chromosome 1 of Burkholderia ambifaria MC40-6.</title>
        <authorList>
            <person name="Copeland A."/>
            <person name="Lucas S."/>
            <person name="Lapidus A."/>
            <person name="Glavina del Rio T."/>
            <person name="Dalin E."/>
            <person name="Tice H."/>
            <person name="Pitluck S."/>
            <person name="Chain P."/>
            <person name="Malfatti S."/>
            <person name="Shin M."/>
            <person name="Vergez L."/>
            <person name="Lang D."/>
            <person name="Schmutz J."/>
            <person name="Larimer F."/>
            <person name="Land M."/>
            <person name="Hauser L."/>
            <person name="Kyrpides N."/>
            <person name="Lykidis A."/>
            <person name="Ramette A."/>
            <person name="Konstantinidis K."/>
            <person name="Tiedje J."/>
            <person name="Richardson P."/>
        </authorList>
    </citation>
    <scope>NUCLEOTIDE SEQUENCE [LARGE SCALE GENOMIC DNA]</scope>
    <source>
        <strain>MC40-6</strain>
    </source>
</reference>
<sequence>MGKIIGIDLGTTNSCVAIMEGNQVKVIENSEGTRTTPSIIAYMDDNEVLVGAPAKRQSVTNPRNTLFAVKRLIGRRFEEKEVQKDIGLMPYAIIKADNGDAWVEAHGEKLAPPQVSAEVLRKMKKTAEDYLGEPVTEAVITVPAYFNDSQRQATKDAGRIAGLEVKRIINEPTAAALAFGLDKAEKGDRKIAVYDLGGGTFDVSIIEIADVDGEMQFEVLSTNGDTFLGGEDFDQRIIDYIIGEFKKEQGVDLSKDVLALQRLKEAAEKAKIELSSSQQTEINLPYITADASGPKHLNLKITRAKLEALVEDLVERTIEPCRIAIKDAGVKVSDIDDVILVGGQTRMPKVQEKVKEFFGKDPRRDVNPDEAVAVGAAIQGQVLSGDRKDVLLLDVTPLSLGIETLGGVMTKMISKNTTIPTKHAQVYSTADDNQSAVTIKVFQGEREMAAGNKLLGEFNLEGIPPSPRGVPQIEVTFDIDANGILHVGAKDKATGKENKITIKANSGLTDAEIDQMIKDAEANAAEDHKLRELADSRNQGDALVHSTKKALTEYGDKLDAGEKEKIEAALKSLEDALKDTSADKATIDAKVEELGQVSQKLGEKMYADMQAQQAGAAGAAGAAEGAAHAGGAQQAADDVVDAEFKEVKKD</sequence>
<dbReference type="EMBL" id="CP001025">
    <property type="protein sequence ID" value="ACB63165.1"/>
    <property type="molecule type" value="Genomic_DNA"/>
</dbReference>
<dbReference type="RefSeq" id="WP_012363152.1">
    <property type="nucleotide sequence ID" value="NC_010551.1"/>
</dbReference>
<dbReference type="SMR" id="B1YTK0"/>
<dbReference type="KEGG" id="bac:BamMC406_0669"/>
<dbReference type="HOGENOM" id="CLU_005965_2_1_4"/>
<dbReference type="OrthoDB" id="9766019at2"/>
<dbReference type="Proteomes" id="UP000001680">
    <property type="component" value="Chromosome 1"/>
</dbReference>
<dbReference type="GO" id="GO:0005524">
    <property type="term" value="F:ATP binding"/>
    <property type="evidence" value="ECO:0007669"/>
    <property type="project" value="UniProtKB-UniRule"/>
</dbReference>
<dbReference type="GO" id="GO:0140662">
    <property type="term" value="F:ATP-dependent protein folding chaperone"/>
    <property type="evidence" value="ECO:0007669"/>
    <property type="project" value="InterPro"/>
</dbReference>
<dbReference type="GO" id="GO:0051082">
    <property type="term" value="F:unfolded protein binding"/>
    <property type="evidence" value="ECO:0007669"/>
    <property type="project" value="InterPro"/>
</dbReference>
<dbReference type="CDD" id="cd10234">
    <property type="entry name" value="ASKHA_NBD_HSP70_DnaK-like"/>
    <property type="match status" value="1"/>
</dbReference>
<dbReference type="FunFam" id="2.60.34.10:FF:000014">
    <property type="entry name" value="Chaperone protein DnaK HSP70"/>
    <property type="match status" value="1"/>
</dbReference>
<dbReference type="FunFam" id="3.30.30.30:FF:000003">
    <property type="entry name" value="Heat shock protein 9"/>
    <property type="match status" value="1"/>
</dbReference>
<dbReference type="FunFam" id="1.20.1270.10:FF:000001">
    <property type="entry name" value="Molecular chaperone DnaK"/>
    <property type="match status" value="1"/>
</dbReference>
<dbReference type="FunFam" id="3.30.420.40:FF:000004">
    <property type="entry name" value="Molecular chaperone DnaK"/>
    <property type="match status" value="1"/>
</dbReference>
<dbReference type="FunFam" id="3.90.640.10:FF:000003">
    <property type="entry name" value="Molecular chaperone DnaK"/>
    <property type="match status" value="1"/>
</dbReference>
<dbReference type="Gene3D" id="1.20.1270.10">
    <property type="match status" value="1"/>
</dbReference>
<dbReference type="Gene3D" id="3.30.420.40">
    <property type="match status" value="2"/>
</dbReference>
<dbReference type="Gene3D" id="3.90.640.10">
    <property type="entry name" value="Actin, Chain A, domain 4"/>
    <property type="match status" value="1"/>
</dbReference>
<dbReference type="Gene3D" id="2.60.34.10">
    <property type="entry name" value="Substrate Binding Domain Of DNAk, Chain A, domain 1"/>
    <property type="match status" value="1"/>
</dbReference>
<dbReference type="HAMAP" id="MF_00332">
    <property type="entry name" value="DnaK"/>
    <property type="match status" value="1"/>
</dbReference>
<dbReference type="InterPro" id="IPR043129">
    <property type="entry name" value="ATPase_NBD"/>
</dbReference>
<dbReference type="InterPro" id="IPR012725">
    <property type="entry name" value="Chaperone_DnaK"/>
</dbReference>
<dbReference type="InterPro" id="IPR018181">
    <property type="entry name" value="Heat_shock_70_CS"/>
</dbReference>
<dbReference type="InterPro" id="IPR029048">
    <property type="entry name" value="HSP70_C_sf"/>
</dbReference>
<dbReference type="InterPro" id="IPR029047">
    <property type="entry name" value="HSP70_peptide-bd_sf"/>
</dbReference>
<dbReference type="InterPro" id="IPR013126">
    <property type="entry name" value="Hsp_70_fam"/>
</dbReference>
<dbReference type="NCBIfam" id="NF001413">
    <property type="entry name" value="PRK00290.1"/>
    <property type="match status" value="1"/>
</dbReference>
<dbReference type="NCBIfam" id="NF003520">
    <property type="entry name" value="PRK05183.1"/>
    <property type="match status" value="1"/>
</dbReference>
<dbReference type="NCBIfam" id="TIGR02350">
    <property type="entry name" value="prok_dnaK"/>
    <property type="match status" value="1"/>
</dbReference>
<dbReference type="PANTHER" id="PTHR19375">
    <property type="entry name" value="HEAT SHOCK PROTEIN 70KDA"/>
    <property type="match status" value="1"/>
</dbReference>
<dbReference type="Pfam" id="PF00012">
    <property type="entry name" value="HSP70"/>
    <property type="match status" value="1"/>
</dbReference>
<dbReference type="PRINTS" id="PR00301">
    <property type="entry name" value="HEATSHOCK70"/>
</dbReference>
<dbReference type="SUPFAM" id="SSF53067">
    <property type="entry name" value="Actin-like ATPase domain"/>
    <property type="match status" value="2"/>
</dbReference>
<dbReference type="SUPFAM" id="SSF100934">
    <property type="entry name" value="Heat shock protein 70kD (HSP70), C-terminal subdomain"/>
    <property type="match status" value="1"/>
</dbReference>
<dbReference type="SUPFAM" id="SSF100920">
    <property type="entry name" value="Heat shock protein 70kD (HSP70), peptide-binding domain"/>
    <property type="match status" value="1"/>
</dbReference>
<dbReference type="PROSITE" id="PS00297">
    <property type="entry name" value="HSP70_1"/>
    <property type="match status" value="1"/>
</dbReference>
<dbReference type="PROSITE" id="PS00329">
    <property type="entry name" value="HSP70_2"/>
    <property type="match status" value="1"/>
</dbReference>
<dbReference type="PROSITE" id="PS01036">
    <property type="entry name" value="HSP70_3"/>
    <property type="match status" value="1"/>
</dbReference>
<protein>
    <recommendedName>
        <fullName evidence="1">Chaperone protein DnaK</fullName>
    </recommendedName>
    <alternativeName>
        <fullName evidence="1">HSP70</fullName>
    </alternativeName>
    <alternativeName>
        <fullName evidence="1">Heat shock 70 kDa protein</fullName>
    </alternativeName>
    <alternativeName>
        <fullName evidence="1">Heat shock protein 70</fullName>
    </alternativeName>
</protein>
<comment type="function">
    <text evidence="1">Acts as a chaperone.</text>
</comment>
<comment type="induction">
    <text evidence="1">By stress conditions e.g. heat shock.</text>
</comment>
<comment type="similarity">
    <text evidence="1">Belongs to the heat shock protein 70 family.</text>
</comment>
<organism>
    <name type="scientific">Burkholderia ambifaria (strain MC40-6)</name>
    <dbReference type="NCBI Taxonomy" id="398577"/>
    <lineage>
        <taxon>Bacteria</taxon>
        <taxon>Pseudomonadati</taxon>
        <taxon>Pseudomonadota</taxon>
        <taxon>Betaproteobacteria</taxon>
        <taxon>Burkholderiales</taxon>
        <taxon>Burkholderiaceae</taxon>
        <taxon>Burkholderia</taxon>
        <taxon>Burkholderia cepacia complex</taxon>
    </lineage>
</organism>